<reference key="1">
    <citation type="journal article" date="2008" name="Antimicrob. Agents Chemother.">
        <title>Mutated response regulator graR is responsible for phenotypic conversion of Staphylococcus aureus from heterogeneous vancomycin-intermediate resistance to vancomycin-intermediate resistance.</title>
        <authorList>
            <person name="Neoh H.-M."/>
            <person name="Cui L."/>
            <person name="Yuzawa H."/>
            <person name="Takeuchi F."/>
            <person name="Matsuo M."/>
            <person name="Hiramatsu K."/>
        </authorList>
    </citation>
    <scope>NUCLEOTIDE SEQUENCE [LARGE SCALE GENOMIC DNA]</scope>
    <source>
        <strain>Mu3 / ATCC 700698</strain>
    </source>
</reference>
<sequence>MISVNDFKTGLTISVDNAIWKVIDFQHVKPGKGSAFVRSKLRNLRTGAIQEKTFRAGEKVEPAMIENRRMQYLYADGDNHVFMDNESFEQTELSSDYLKEELNYLKEGMEVQIQTYEGETIGVELPKTVELTVTETEPGIKGDTATGATKSATVETGYTLNVPLFVNEGDVLIINTGDGSYISRG</sequence>
<name>EFP_STAA1</name>
<evidence type="ECO:0000255" key="1">
    <source>
        <dbReference type="HAMAP-Rule" id="MF_00141"/>
    </source>
</evidence>
<gene>
    <name evidence="1" type="primary">efp</name>
    <name type="ordered locus">SAHV_1516</name>
</gene>
<feature type="chain" id="PRO_1000010864" description="Elongation factor P">
    <location>
        <begin position="1"/>
        <end position="185"/>
    </location>
</feature>
<keyword id="KW-0963">Cytoplasm</keyword>
<keyword id="KW-0251">Elongation factor</keyword>
<keyword id="KW-0648">Protein biosynthesis</keyword>
<accession>A7X2Q9</accession>
<dbReference type="EMBL" id="AP009324">
    <property type="protein sequence ID" value="BAF78399.1"/>
    <property type="molecule type" value="Genomic_DNA"/>
</dbReference>
<dbReference type="RefSeq" id="WP_000626504.1">
    <property type="nucleotide sequence ID" value="NZ_CTYB01000003.1"/>
</dbReference>
<dbReference type="SMR" id="A7X2Q9"/>
<dbReference type="KEGG" id="saw:SAHV_1516"/>
<dbReference type="HOGENOM" id="CLU_074944_0_1_9"/>
<dbReference type="UniPathway" id="UPA00345"/>
<dbReference type="GO" id="GO:0005737">
    <property type="term" value="C:cytoplasm"/>
    <property type="evidence" value="ECO:0007669"/>
    <property type="project" value="UniProtKB-SubCell"/>
</dbReference>
<dbReference type="GO" id="GO:0003746">
    <property type="term" value="F:translation elongation factor activity"/>
    <property type="evidence" value="ECO:0007669"/>
    <property type="project" value="UniProtKB-UniRule"/>
</dbReference>
<dbReference type="GO" id="GO:0043043">
    <property type="term" value="P:peptide biosynthetic process"/>
    <property type="evidence" value="ECO:0007669"/>
    <property type="project" value="InterPro"/>
</dbReference>
<dbReference type="CDD" id="cd04470">
    <property type="entry name" value="S1_EF-P_repeat_1"/>
    <property type="match status" value="1"/>
</dbReference>
<dbReference type="CDD" id="cd05794">
    <property type="entry name" value="S1_EF-P_repeat_2"/>
    <property type="match status" value="1"/>
</dbReference>
<dbReference type="FunFam" id="2.30.30.30:FF:000010">
    <property type="entry name" value="Elongation factor P"/>
    <property type="match status" value="1"/>
</dbReference>
<dbReference type="FunFam" id="2.40.50.140:FF:000004">
    <property type="entry name" value="Elongation factor P"/>
    <property type="match status" value="1"/>
</dbReference>
<dbReference type="FunFam" id="2.40.50.140:FF:000009">
    <property type="entry name" value="Elongation factor P"/>
    <property type="match status" value="1"/>
</dbReference>
<dbReference type="Gene3D" id="2.30.30.30">
    <property type="match status" value="1"/>
</dbReference>
<dbReference type="Gene3D" id="2.40.50.140">
    <property type="entry name" value="Nucleic acid-binding proteins"/>
    <property type="match status" value="2"/>
</dbReference>
<dbReference type="HAMAP" id="MF_00141">
    <property type="entry name" value="EF_P"/>
    <property type="match status" value="1"/>
</dbReference>
<dbReference type="InterPro" id="IPR015365">
    <property type="entry name" value="Elong-fact-P_C"/>
</dbReference>
<dbReference type="InterPro" id="IPR012340">
    <property type="entry name" value="NA-bd_OB-fold"/>
</dbReference>
<dbReference type="InterPro" id="IPR014722">
    <property type="entry name" value="Rib_uL2_dom2"/>
</dbReference>
<dbReference type="InterPro" id="IPR020599">
    <property type="entry name" value="Transl_elong_fac_P/YeiP"/>
</dbReference>
<dbReference type="InterPro" id="IPR013185">
    <property type="entry name" value="Transl_elong_KOW-like"/>
</dbReference>
<dbReference type="InterPro" id="IPR001059">
    <property type="entry name" value="Transl_elong_P/YeiP_cen"/>
</dbReference>
<dbReference type="InterPro" id="IPR013852">
    <property type="entry name" value="Transl_elong_P/YeiP_CS"/>
</dbReference>
<dbReference type="InterPro" id="IPR011768">
    <property type="entry name" value="Transl_elongation_fac_P"/>
</dbReference>
<dbReference type="InterPro" id="IPR008991">
    <property type="entry name" value="Translation_prot_SH3-like_sf"/>
</dbReference>
<dbReference type="NCBIfam" id="TIGR00038">
    <property type="entry name" value="efp"/>
    <property type="match status" value="1"/>
</dbReference>
<dbReference type="NCBIfam" id="NF001810">
    <property type="entry name" value="PRK00529.1"/>
    <property type="match status" value="1"/>
</dbReference>
<dbReference type="PANTHER" id="PTHR30053">
    <property type="entry name" value="ELONGATION FACTOR P"/>
    <property type="match status" value="1"/>
</dbReference>
<dbReference type="PANTHER" id="PTHR30053:SF12">
    <property type="entry name" value="ELONGATION FACTOR P (EF-P) FAMILY PROTEIN"/>
    <property type="match status" value="1"/>
</dbReference>
<dbReference type="Pfam" id="PF01132">
    <property type="entry name" value="EFP"/>
    <property type="match status" value="1"/>
</dbReference>
<dbReference type="Pfam" id="PF08207">
    <property type="entry name" value="EFP_N"/>
    <property type="match status" value="1"/>
</dbReference>
<dbReference type="Pfam" id="PF09285">
    <property type="entry name" value="Elong-fact-P_C"/>
    <property type="match status" value="1"/>
</dbReference>
<dbReference type="PIRSF" id="PIRSF005901">
    <property type="entry name" value="EF-P"/>
    <property type="match status" value="1"/>
</dbReference>
<dbReference type="SMART" id="SM01185">
    <property type="entry name" value="EFP"/>
    <property type="match status" value="1"/>
</dbReference>
<dbReference type="SMART" id="SM00841">
    <property type="entry name" value="Elong-fact-P_C"/>
    <property type="match status" value="1"/>
</dbReference>
<dbReference type="SUPFAM" id="SSF50249">
    <property type="entry name" value="Nucleic acid-binding proteins"/>
    <property type="match status" value="2"/>
</dbReference>
<dbReference type="SUPFAM" id="SSF50104">
    <property type="entry name" value="Translation proteins SH3-like domain"/>
    <property type="match status" value="1"/>
</dbReference>
<dbReference type="PROSITE" id="PS01275">
    <property type="entry name" value="EFP"/>
    <property type="match status" value="1"/>
</dbReference>
<protein>
    <recommendedName>
        <fullName evidence="1">Elongation factor P</fullName>
        <shortName evidence="1">EF-P</shortName>
    </recommendedName>
</protein>
<comment type="function">
    <text evidence="1">Involved in peptide bond synthesis. Stimulates efficient translation and peptide-bond synthesis on native or reconstituted 70S ribosomes in vitro. Probably functions indirectly by altering the affinity of the ribosome for aminoacyl-tRNA, thus increasing their reactivity as acceptors for peptidyl transferase.</text>
</comment>
<comment type="pathway">
    <text evidence="1">Protein biosynthesis; polypeptide chain elongation.</text>
</comment>
<comment type="subcellular location">
    <subcellularLocation>
        <location evidence="1">Cytoplasm</location>
    </subcellularLocation>
</comment>
<comment type="similarity">
    <text evidence="1">Belongs to the elongation factor P family.</text>
</comment>
<organism>
    <name type="scientific">Staphylococcus aureus (strain Mu3 / ATCC 700698)</name>
    <dbReference type="NCBI Taxonomy" id="418127"/>
    <lineage>
        <taxon>Bacteria</taxon>
        <taxon>Bacillati</taxon>
        <taxon>Bacillota</taxon>
        <taxon>Bacilli</taxon>
        <taxon>Bacillales</taxon>
        <taxon>Staphylococcaceae</taxon>
        <taxon>Staphylococcus</taxon>
    </lineage>
</organism>
<proteinExistence type="inferred from homology"/>